<evidence type="ECO:0000255" key="1">
    <source>
        <dbReference type="HAMAP-Rule" id="MF_01371"/>
    </source>
</evidence>
<evidence type="ECO:0000305" key="2"/>
<protein>
    <recommendedName>
        <fullName evidence="1">Large ribosomal subunit protein uL30</fullName>
    </recommendedName>
    <alternativeName>
        <fullName evidence="2">50S ribosomal protein L30</fullName>
    </alternativeName>
</protein>
<keyword id="KW-0687">Ribonucleoprotein</keyword>
<keyword id="KW-0689">Ribosomal protein</keyword>
<feature type="chain" id="PRO_0000273878" description="Large ribosomal subunit protein uL30">
    <location>
        <begin position="1"/>
        <end position="60"/>
    </location>
</feature>
<sequence>MAQIKITLSKSPIGRKPEQRKTVAALGLGKLNSSVVKEDNAAIRGMVNAVSHLVTVEDVK</sequence>
<accession>Q5LXS9</accession>
<reference key="1">
    <citation type="journal article" date="2004" name="Nat. Biotechnol.">
        <title>Complete sequence and comparative genome analysis of the dairy bacterium Streptococcus thermophilus.</title>
        <authorList>
            <person name="Bolotin A."/>
            <person name="Quinquis B."/>
            <person name="Renault P."/>
            <person name="Sorokin A."/>
            <person name="Ehrlich S.D."/>
            <person name="Kulakauskas S."/>
            <person name="Lapidus A."/>
            <person name="Goltsman E."/>
            <person name="Mazur M."/>
            <person name="Pusch G.D."/>
            <person name="Fonstein M."/>
            <person name="Overbeek R."/>
            <person name="Kyprides N."/>
            <person name="Purnelle B."/>
            <person name="Prozzi D."/>
            <person name="Ngui K."/>
            <person name="Masuy D."/>
            <person name="Hancy F."/>
            <person name="Burteau S."/>
            <person name="Boutry M."/>
            <person name="Delcour J."/>
            <person name="Goffeau A."/>
            <person name="Hols P."/>
        </authorList>
    </citation>
    <scope>NUCLEOTIDE SEQUENCE [LARGE SCALE GENOMIC DNA]</scope>
    <source>
        <strain>CNRZ 1066</strain>
    </source>
</reference>
<gene>
    <name evidence="1" type="primary">rpmD</name>
    <name type="ordered locus">str1916</name>
</gene>
<organism>
    <name type="scientific">Streptococcus thermophilus (strain CNRZ 1066)</name>
    <dbReference type="NCBI Taxonomy" id="299768"/>
    <lineage>
        <taxon>Bacteria</taxon>
        <taxon>Bacillati</taxon>
        <taxon>Bacillota</taxon>
        <taxon>Bacilli</taxon>
        <taxon>Lactobacillales</taxon>
        <taxon>Streptococcaceae</taxon>
        <taxon>Streptococcus</taxon>
    </lineage>
</organism>
<proteinExistence type="inferred from homology"/>
<dbReference type="EMBL" id="CP000024">
    <property type="protein sequence ID" value="AAV63429.1"/>
    <property type="molecule type" value="Genomic_DNA"/>
</dbReference>
<dbReference type="RefSeq" id="WP_002946172.1">
    <property type="nucleotide sequence ID" value="NC_006449.1"/>
</dbReference>
<dbReference type="SMR" id="Q5LXS9"/>
<dbReference type="GeneID" id="66899644"/>
<dbReference type="KEGG" id="stc:str1916"/>
<dbReference type="HOGENOM" id="CLU_131047_2_1_9"/>
<dbReference type="GO" id="GO:0022625">
    <property type="term" value="C:cytosolic large ribosomal subunit"/>
    <property type="evidence" value="ECO:0007669"/>
    <property type="project" value="TreeGrafter"/>
</dbReference>
<dbReference type="GO" id="GO:0003735">
    <property type="term" value="F:structural constituent of ribosome"/>
    <property type="evidence" value="ECO:0007669"/>
    <property type="project" value="InterPro"/>
</dbReference>
<dbReference type="GO" id="GO:0006412">
    <property type="term" value="P:translation"/>
    <property type="evidence" value="ECO:0007669"/>
    <property type="project" value="UniProtKB-UniRule"/>
</dbReference>
<dbReference type="CDD" id="cd01658">
    <property type="entry name" value="Ribosomal_L30"/>
    <property type="match status" value="1"/>
</dbReference>
<dbReference type="FunFam" id="3.30.1390.20:FF:000001">
    <property type="entry name" value="50S ribosomal protein L30"/>
    <property type="match status" value="1"/>
</dbReference>
<dbReference type="Gene3D" id="3.30.1390.20">
    <property type="entry name" value="Ribosomal protein L30, ferredoxin-like fold domain"/>
    <property type="match status" value="1"/>
</dbReference>
<dbReference type="HAMAP" id="MF_01371_B">
    <property type="entry name" value="Ribosomal_uL30_B"/>
    <property type="match status" value="1"/>
</dbReference>
<dbReference type="InterPro" id="IPR036919">
    <property type="entry name" value="Ribo_uL30_ferredoxin-like_sf"/>
</dbReference>
<dbReference type="InterPro" id="IPR005996">
    <property type="entry name" value="Ribosomal_uL30_bac-type"/>
</dbReference>
<dbReference type="InterPro" id="IPR018038">
    <property type="entry name" value="Ribosomal_uL30_CS"/>
</dbReference>
<dbReference type="InterPro" id="IPR016082">
    <property type="entry name" value="Ribosomal_uL30_ferredoxin-like"/>
</dbReference>
<dbReference type="NCBIfam" id="TIGR01308">
    <property type="entry name" value="rpmD_bact"/>
    <property type="match status" value="1"/>
</dbReference>
<dbReference type="PANTHER" id="PTHR15892:SF2">
    <property type="entry name" value="LARGE RIBOSOMAL SUBUNIT PROTEIN UL30M"/>
    <property type="match status" value="1"/>
</dbReference>
<dbReference type="PANTHER" id="PTHR15892">
    <property type="entry name" value="MITOCHONDRIAL RIBOSOMAL PROTEIN L30"/>
    <property type="match status" value="1"/>
</dbReference>
<dbReference type="Pfam" id="PF00327">
    <property type="entry name" value="Ribosomal_L30"/>
    <property type="match status" value="1"/>
</dbReference>
<dbReference type="PIRSF" id="PIRSF002211">
    <property type="entry name" value="Ribosomal_L30_bac-type"/>
    <property type="match status" value="1"/>
</dbReference>
<dbReference type="SUPFAM" id="SSF55129">
    <property type="entry name" value="Ribosomal protein L30p/L7e"/>
    <property type="match status" value="1"/>
</dbReference>
<dbReference type="PROSITE" id="PS00634">
    <property type="entry name" value="RIBOSOMAL_L30"/>
    <property type="match status" value="1"/>
</dbReference>
<comment type="subunit">
    <text evidence="1">Part of the 50S ribosomal subunit.</text>
</comment>
<comment type="similarity">
    <text evidence="1">Belongs to the universal ribosomal protein uL30 family.</text>
</comment>
<name>RL30_STRT1</name>